<dbReference type="EC" id="2.7.11.1" evidence="1"/>
<dbReference type="EC" id="3.6.4.-" evidence="1"/>
<dbReference type="EMBL" id="BX548175">
    <property type="protein sequence ID" value="CAE21593.1"/>
    <property type="molecule type" value="Genomic_DNA"/>
</dbReference>
<dbReference type="RefSeq" id="WP_011130786.1">
    <property type="nucleotide sequence ID" value="NC_005071.1"/>
</dbReference>
<dbReference type="SMR" id="Q7V5W7"/>
<dbReference type="KEGG" id="pmt:PMT_1418"/>
<dbReference type="eggNOG" id="COG0467">
    <property type="taxonomic scope" value="Bacteria"/>
</dbReference>
<dbReference type="HOGENOM" id="CLU_023669_4_1_3"/>
<dbReference type="OrthoDB" id="9787927at2"/>
<dbReference type="Proteomes" id="UP000001423">
    <property type="component" value="Chromosome"/>
</dbReference>
<dbReference type="GO" id="GO:0005524">
    <property type="term" value="F:ATP binding"/>
    <property type="evidence" value="ECO:0007669"/>
    <property type="project" value="UniProtKB-UniRule"/>
</dbReference>
<dbReference type="GO" id="GO:0016887">
    <property type="term" value="F:ATP hydrolysis activity"/>
    <property type="evidence" value="ECO:0007669"/>
    <property type="project" value="RHEA"/>
</dbReference>
<dbReference type="GO" id="GO:0003677">
    <property type="term" value="F:DNA binding"/>
    <property type="evidence" value="ECO:0007669"/>
    <property type="project" value="InterPro"/>
</dbReference>
<dbReference type="GO" id="GO:0000287">
    <property type="term" value="F:magnesium ion binding"/>
    <property type="evidence" value="ECO:0007669"/>
    <property type="project" value="UniProtKB-UniRule"/>
</dbReference>
<dbReference type="GO" id="GO:0106310">
    <property type="term" value="F:protein serine kinase activity"/>
    <property type="evidence" value="ECO:0007669"/>
    <property type="project" value="RHEA"/>
</dbReference>
<dbReference type="GO" id="GO:0004674">
    <property type="term" value="F:protein serine/threonine kinase activity"/>
    <property type="evidence" value="ECO:0007669"/>
    <property type="project" value="UniProtKB-KW"/>
</dbReference>
<dbReference type="GO" id="GO:0004712">
    <property type="term" value="F:protein serine/threonine/tyrosine kinase activity"/>
    <property type="evidence" value="ECO:0007669"/>
    <property type="project" value="UniProtKB-UniRule"/>
</dbReference>
<dbReference type="GO" id="GO:0007623">
    <property type="term" value="P:circadian rhythm"/>
    <property type="evidence" value="ECO:0007669"/>
    <property type="project" value="UniProtKB-UniRule"/>
</dbReference>
<dbReference type="GO" id="GO:0042752">
    <property type="term" value="P:regulation of circadian rhythm"/>
    <property type="evidence" value="ECO:0007669"/>
    <property type="project" value="InterPro"/>
</dbReference>
<dbReference type="GO" id="GO:0006355">
    <property type="term" value="P:regulation of DNA-templated transcription"/>
    <property type="evidence" value="ECO:0007669"/>
    <property type="project" value="InterPro"/>
</dbReference>
<dbReference type="CDD" id="cd19485">
    <property type="entry name" value="KaiC-N"/>
    <property type="match status" value="1"/>
</dbReference>
<dbReference type="CDD" id="cd19484">
    <property type="entry name" value="KaiC_C"/>
    <property type="match status" value="1"/>
</dbReference>
<dbReference type="Gene3D" id="3.40.50.300">
    <property type="entry name" value="P-loop containing nucleotide triphosphate hydrolases"/>
    <property type="match status" value="2"/>
</dbReference>
<dbReference type="HAMAP" id="MF_01836">
    <property type="entry name" value="KaiC"/>
    <property type="match status" value="1"/>
</dbReference>
<dbReference type="InterPro" id="IPR051347">
    <property type="entry name" value="Circadian_clock_KaiC-rel"/>
</dbReference>
<dbReference type="InterPro" id="IPR013503">
    <property type="entry name" value="Circadian_KaiC_bact"/>
</dbReference>
<dbReference type="InterPro" id="IPR030665">
    <property type="entry name" value="KaiC"/>
</dbReference>
<dbReference type="InterPro" id="IPR014774">
    <property type="entry name" value="KaiC-like_dom"/>
</dbReference>
<dbReference type="InterPro" id="IPR047222">
    <property type="entry name" value="KaiC_C"/>
</dbReference>
<dbReference type="InterPro" id="IPR010624">
    <property type="entry name" value="KaiC_dom"/>
</dbReference>
<dbReference type="InterPro" id="IPR047221">
    <property type="entry name" value="KaiC_N"/>
</dbReference>
<dbReference type="InterPro" id="IPR027417">
    <property type="entry name" value="P-loop_NTPase"/>
</dbReference>
<dbReference type="NCBIfam" id="TIGR02655">
    <property type="entry name" value="circ_KaiC"/>
    <property type="match status" value="1"/>
</dbReference>
<dbReference type="NCBIfam" id="NF006799">
    <property type="entry name" value="PRK09302.1"/>
    <property type="match status" value="1"/>
</dbReference>
<dbReference type="PANTHER" id="PTHR42926">
    <property type="match status" value="1"/>
</dbReference>
<dbReference type="PANTHER" id="PTHR42926:SF1">
    <property type="entry name" value="CIRCADIAN CLOCK OSCILLATOR PROTEIN KAIC 1"/>
    <property type="match status" value="1"/>
</dbReference>
<dbReference type="Pfam" id="PF06745">
    <property type="entry name" value="ATPase"/>
    <property type="match status" value="2"/>
</dbReference>
<dbReference type="PIRSF" id="PIRSF039117">
    <property type="entry name" value="KaiC"/>
    <property type="match status" value="1"/>
</dbReference>
<dbReference type="SUPFAM" id="SSF52540">
    <property type="entry name" value="P-loop containing nucleoside triphosphate hydrolases"/>
    <property type="match status" value="2"/>
</dbReference>
<dbReference type="PROSITE" id="PS51146">
    <property type="entry name" value="KAIC"/>
    <property type="match status" value="2"/>
</dbReference>
<reference key="1">
    <citation type="journal article" date="2003" name="Nature">
        <title>Genome divergence in two Prochlorococcus ecotypes reflects oceanic niche differentiation.</title>
        <authorList>
            <person name="Rocap G."/>
            <person name="Larimer F.W."/>
            <person name="Lamerdin J.E."/>
            <person name="Malfatti S."/>
            <person name="Chain P."/>
            <person name="Ahlgren N.A."/>
            <person name="Arellano A."/>
            <person name="Coleman M."/>
            <person name="Hauser L."/>
            <person name="Hess W.R."/>
            <person name="Johnson Z.I."/>
            <person name="Land M.L."/>
            <person name="Lindell D."/>
            <person name="Post A.F."/>
            <person name="Regala W."/>
            <person name="Shah M."/>
            <person name="Shaw S.L."/>
            <person name="Steglich C."/>
            <person name="Sullivan M.B."/>
            <person name="Ting C.S."/>
            <person name="Tolonen A."/>
            <person name="Webb E.A."/>
            <person name="Zinser E.R."/>
            <person name="Chisholm S.W."/>
        </authorList>
    </citation>
    <scope>NUCLEOTIDE SEQUENCE [LARGE SCALE GENOMIC DNA]</scope>
    <source>
        <strain>MIT 9313</strain>
    </source>
</reference>
<sequence>MQSSSAGGSSHMQVQKLPTGIEGFDDICHGGLPSGRSTLISGTSGTGKTVFSLHFLHNGITQFDEPGIFVTFEESPSDILRNSASFGWNLQEMVEQDKLFILDASPDPDGQDVAGSFDLSGLIERINYAIVKYKAKRVAIDSMTAVFQQYDAISVVRREIFRLIARLKVIGVTTVMTTERIDEYGPIARYGVEEFVSDNVVILRNVLETEKRRRTVEILKLRGTTHMKGEFPFTMGTHGVSVFPLGAMRLTQRSSNVRISSGVPNLDEMCGGGFFKDSIILVTGATGTGKTLLVSKFIEDAFRNQERAILFAYEESRAQLLRNATSWGIDFEEMERQGLLKIICAYPESTGLEDHLEIIKTAIGQFKPSRMAIDSLSALARGVSLNAFRQFVIGVTGYAKQEEIAGFFTNTAEEFMGSHSITDSHISTITDTILLLQYVEIRGEMARAVNVFKMRGSWHDKRIREYVITDNGPQIKDSFSNFERIFSGAPHRITDDERA</sequence>
<accession>Q7V5W7</accession>
<proteinExistence type="inferred from homology"/>
<evidence type="ECO:0000255" key="1">
    <source>
        <dbReference type="HAMAP-Rule" id="MF_01836"/>
    </source>
</evidence>
<gene>
    <name evidence="1" type="primary">kaiC</name>
    <name type="ordered locus">PMT_1418</name>
</gene>
<keyword id="KW-0067">ATP-binding</keyword>
<keyword id="KW-0090">Biological rhythms</keyword>
<keyword id="KW-0378">Hydrolase</keyword>
<keyword id="KW-0418">Kinase</keyword>
<keyword id="KW-0460">Magnesium</keyword>
<keyword id="KW-0479">Metal-binding</keyword>
<keyword id="KW-0547">Nucleotide-binding</keyword>
<keyword id="KW-0597">Phosphoprotein</keyword>
<keyword id="KW-1185">Reference proteome</keyword>
<keyword id="KW-0677">Repeat</keyword>
<keyword id="KW-0723">Serine/threonine-protein kinase</keyword>
<keyword id="KW-0804">Transcription</keyword>
<keyword id="KW-0805">Transcription regulation</keyword>
<keyword id="KW-0808">Transferase</keyword>
<feature type="chain" id="PRO_0000217777" description="Circadian clock oscillator protein KaiC">
    <location>
        <begin position="1"/>
        <end position="499"/>
    </location>
</feature>
<feature type="domain" description="KaiC 1" evidence="1">
    <location>
        <begin position="1"/>
        <end position="243"/>
    </location>
</feature>
<feature type="domain" description="KaiC 2" evidence="1">
    <location>
        <begin position="257"/>
        <end position="499"/>
    </location>
</feature>
<feature type="binding site" evidence="1">
    <location>
        <position position="45"/>
    </location>
    <ligand>
        <name>ATP</name>
        <dbReference type="ChEBI" id="CHEBI:30616"/>
        <label>1</label>
        <note>ligand shared between homodimeric partners</note>
    </ligand>
</feature>
<feature type="binding site" evidence="1">
    <location>
        <position position="46"/>
    </location>
    <ligand>
        <name>ATP</name>
        <dbReference type="ChEBI" id="CHEBI:30616"/>
        <label>1</label>
        <note>ligand shared between homodimeric partners</note>
    </ligand>
</feature>
<feature type="binding site" evidence="1">
    <location>
        <position position="47"/>
    </location>
    <ligand>
        <name>ATP</name>
        <dbReference type="ChEBI" id="CHEBI:30616"/>
        <label>1</label>
        <note>ligand shared between homodimeric partners</note>
    </ligand>
</feature>
<feature type="binding site" evidence="1">
    <location>
        <position position="48"/>
    </location>
    <ligand>
        <name>ATP</name>
        <dbReference type="ChEBI" id="CHEBI:30616"/>
        <label>1</label>
        <note>ligand shared between homodimeric partners</note>
    </ligand>
</feature>
<feature type="binding site" evidence="1">
    <location>
        <position position="49"/>
    </location>
    <ligand>
        <name>ATP</name>
        <dbReference type="ChEBI" id="CHEBI:30616"/>
        <label>1</label>
        <note>ligand shared between homodimeric partners</note>
    </ligand>
</feature>
<feature type="binding site" evidence="1">
    <location>
        <position position="49"/>
    </location>
    <ligand>
        <name>Mg(2+)</name>
        <dbReference type="ChEBI" id="CHEBI:18420"/>
        <label>1</label>
    </ligand>
</feature>
<feature type="binding site" evidence="1">
    <location>
        <position position="85"/>
    </location>
    <ligand>
        <name>ATP</name>
        <dbReference type="ChEBI" id="CHEBI:30616"/>
        <label>1</label>
        <note>ligand shared between homodimeric partners</note>
    </ligand>
</feature>
<feature type="binding site" evidence="1">
    <location>
        <position position="220"/>
    </location>
    <ligand>
        <name>ATP</name>
        <dbReference type="ChEBI" id="CHEBI:30616"/>
        <label>1</label>
        <note>ligand shared between homodimeric partners</note>
    </ligand>
</feature>
<feature type="binding site" evidence="1">
    <location>
        <position position="221"/>
    </location>
    <ligand>
        <name>ATP</name>
        <dbReference type="ChEBI" id="CHEBI:30616"/>
        <label>1</label>
        <note>ligand shared between homodimeric partners</note>
    </ligand>
</feature>
<feature type="binding site" evidence="1">
    <location>
        <position position="222"/>
    </location>
    <ligand>
        <name>ATP</name>
        <dbReference type="ChEBI" id="CHEBI:30616"/>
        <label>1</label>
        <note>ligand shared between homodimeric partners</note>
    </ligand>
</feature>
<feature type="binding site" evidence="1">
    <location>
        <position position="224"/>
    </location>
    <ligand>
        <name>ATP</name>
        <dbReference type="ChEBI" id="CHEBI:30616"/>
        <label>1</label>
        <note>ligand shared between homodimeric partners</note>
    </ligand>
</feature>
<feature type="binding site" evidence="1">
    <location>
        <position position="226"/>
    </location>
    <ligand>
        <name>ATP</name>
        <dbReference type="ChEBI" id="CHEBI:30616"/>
        <label>1</label>
        <note>ligand shared between homodimeric partners</note>
    </ligand>
</feature>
<feature type="binding site" evidence="1">
    <location>
        <position position="286"/>
    </location>
    <ligand>
        <name>ATP</name>
        <dbReference type="ChEBI" id="CHEBI:30616"/>
        <label>2</label>
        <note>ligand shared between homodimeric partners</note>
    </ligand>
</feature>
<feature type="binding site" evidence="1">
    <location>
        <position position="287"/>
    </location>
    <ligand>
        <name>ATP</name>
        <dbReference type="ChEBI" id="CHEBI:30616"/>
        <label>2</label>
        <note>ligand shared between homodimeric partners</note>
    </ligand>
</feature>
<feature type="binding site" evidence="1">
    <location>
        <position position="288"/>
    </location>
    <ligand>
        <name>ATP</name>
        <dbReference type="ChEBI" id="CHEBI:30616"/>
        <label>2</label>
        <note>ligand shared between homodimeric partners</note>
    </ligand>
</feature>
<feature type="binding site" evidence="1">
    <location>
        <position position="289"/>
    </location>
    <ligand>
        <name>ATP</name>
        <dbReference type="ChEBI" id="CHEBI:30616"/>
        <label>2</label>
        <note>ligand shared between homodimeric partners</note>
    </ligand>
</feature>
<feature type="binding site" evidence="1">
    <location>
        <position position="290"/>
    </location>
    <ligand>
        <name>ATP</name>
        <dbReference type="ChEBI" id="CHEBI:30616"/>
        <label>2</label>
        <note>ligand shared between homodimeric partners</note>
    </ligand>
</feature>
<feature type="binding site" evidence="1">
    <location>
        <position position="291"/>
    </location>
    <ligand>
        <name>ATP</name>
        <dbReference type="ChEBI" id="CHEBI:30616"/>
        <label>2</label>
        <note>ligand shared between homodimeric partners</note>
    </ligand>
</feature>
<feature type="binding site" evidence="1">
    <location>
        <position position="291"/>
    </location>
    <ligand>
        <name>Mg(2+)</name>
        <dbReference type="ChEBI" id="CHEBI:18420"/>
        <label>2</label>
    </ligand>
</feature>
<feature type="binding site" evidence="1">
    <location>
        <position position="292"/>
    </location>
    <ligand>
        <name>ATP</name>
        <dbReference type="ChEBI" id="CHEBI:30616"/>
        <label>2</label>
        <note>ligand shared between homodimeric partners</note>
    </ligand>
</feature>
<feature type="binding site" evidence="1">
    <location>
        <position position="314"/>
    </location>
    <ligand>
        <name>Mg(2+)</name>
        <dbReference type="ChEBI" id="CHEBI:18420"/>
        <label>2</label>
    </ligand>
</feature>
<feature type="binding site" evidence="1">
    <location>
        <position position="327"/>
    </location>
    <ligand>
        <name>ATP</name>
        <dbReference type="ChEBI" id="CHEBI:30616"/>
        <label>2</label>
        <note>ligand shared between homodimeric partners</note>
    </ligand>
</feature>
<feature type="binding site" evidence="1">
    <location>
        <position position="447"/>
    </location>
    <ligand>
        <name>ATP</name>
        <dbReference type="ChEBI" id="CHEBI:30616"/>
        <label>2</label>
        <note>ligand shared between homodimeric partners</note>
    </ligand>
</feature>
<feature type="binding site" evidence="1">
    <location>
        <position position="453"/>
    </location>
    <ligand>
        <name>ATP</name>
        <dbReference type="ChEBI" id="CHEBI:30616"/>
        <label>2</label>
        <note>ligand shared between homodimeric partners</note>
    </ligand>
</feature>
<feature type="binding site" evidence="1">
    <location>
        <position position="454"/>
    </location>
    <ligand>
        <name>ATP</name>
        <dbReference type="ChEBI" id="CHEBI:30616"/>
        <label>2</label>
        <note>ligand shared between homodimeric partners</note>
    </ligand>
</feature>
<feature type="binding site" evidence="1">
    <location>
        <position position="455"/>
    </location>
    <ligand>
        <name>ATP</name>
        <dbReference type="ChEBI" id="CHEBI:30616"/>
        <label>2</label>
        <note>ligand shared between homodimeric partners</note>
    </ligand>
</feature>
<feature type="binding site" evidence="1">
    <location>
        <position position="457"/>
    </location>
    <ligand>
        <name>ATP</name>
        <dbReference type="ChEBI" id="CHEBI:30616"/>
        <label>2</label>
        <note>ligand shared between homodimeric partners</note>
    </ligand>
</feature>
<feature type="binding site" evidence="1">
    <location>
        <position position="459"/>
    </location>
    <ligand>
        <name>ATP</name>
        <dbReference type="ChEBI" id="CHEBI:30616"/>
        <label>2</label>
        <note>ligand shared between homodimeric partners</note>
    </ligand>
</feature>
<feature type="binding site" evidence="1">
    <location>
        <position position="461"/>
    </location>
    <ligand>
        <name>ATP</name>
        <dbReference type="ChEBI" id="CHEBI:30616"/>
        <label>2</label>
        <note>ligand shared between homodimeric partners</note>
    </ligand>
</feature>
<feature type="modified residue" description="Phosphoserine; by autocatalysis" evidence="1">
    <location>
        <position position="427"/>
    </location>
</feature>
<feature type="modified residue" description="Phosphothreonine; by autocatalysis" evidence="1">
    <location>
        <position position="428"/>
    </location>
</feature>
<protein>
    <recommendedName>
        <fullName evidence="1">Circadian clock oscillator protein KaiC</fullName>
        <ecNumber evidence="1">2.7.11.1</ecNumber>
        <ecNumber evidence="1">3.6.4.-</ecNumber>
    </recommendedName>
</protein>
<name>KAIC_PROMM</name>
<comment type="function">
    <text evidence="1">Central component of the KaiBC oscillator complex, which constitutes the main circadian regulator in cyanobacteria. Its composition changes during the circadian cycle to control KaiC phosphorylation. Autophosphorylates and has a weak ATPase activity; ATPase activity defines the circadian period.</text>
</comment>
<comment type="catalytic activity">
    <reaction evidence="1">
        <text>L-seryl-[protein] + ATP = O-phospho-L-seryl-[protein] + ADP + H(+)</text>
        <dbReference type="Rhea" id="RHEA:17989"/>
        <dbReference type="Rhea" id="RHEA-COMP:9863"/>
        <dbReference type="Rhea" id="RHEA-COMP:11604"/>
        <dbReference type="ChEBI" id="CHEBI:15378"/>
        <dbReference type="ChEBI" id="CHEBI:29999"/>
        <dbReference type="ChEBI" id="CHEBI:30616"/>
        <dbReference type="ChEBI" id="CHEBI:83421"/>
        <dbReference type="ChEBI" id="CHEBI:456216"/>
        <dbReference type="EC" id="2.7.11.1"/>
    </reaction>
</comment>
<comment type="catalytic activity">
    <reaction evidence="1">
        <text>L-threonyl-[protein] + ATP = O-phospho-L-threonyl-[protein] + ADP + H(+)</text>
        <dbReference type="Rhea" id="RHEA:46608"/>
        <dbReference type="Rhea" id="RHEA-COMP:11060"/>
        <dbReference type="Rhea" id="RHEA-COMP:11605"/>
        <dbReference type="ChEBI" id="CHEBI:15378"/>
        <dbReference type="ChEBI" id="CHEBI:30013"/>
        <dbReference type="ChEBI" id="CHEBI:30616"/>
        <dbReference type="ChEBI" id="CHEBI:61977"/>
        <dbReference type="ChEBI" id="CHEBI:456216"/>
        <dbReference type="EC" id="2.7.11.1"/>
    </reaction>
</comment>
<comment type="catalytic activity">
    <reaction evidence="1">
        <text>ATP + H2O = ADP + phosphate + H(+)</text>
        <dbReference type="Rhea" id="RHEA:13065"/>
        <dbReference type="ChEBI" id="CHEBI:15377"/>
        <dbReference type="ChEBI" id="CHEBI:15378"/>
        <dbReference type="ChEBI" id="CHEBI:30616"/>
        <dbReference type="ChEBI" id="CHEBI:43474"/>
        <dbReference type="ChEBI" id="CHEBI:456216"/>
    </reaction>
</comment>
<comment type="cofactor">
    <cofactor evidence="1">
        <name>Mg(2+)</name>
        <dbReference type="ChEBI" id="CHEBI:18420"/>
    </cofactor>
    <text evidence="1">Binds 2 Mg(2+) ions per subunit, one in each domain. Mg(2+) is required for hexamerization and phosphatase activity.</text>
</comment>
<comment type="subunit">
    <text evidence="1">Homohexamer; hexamerization is dependent on ATP-binding. Component of the KaiBC complex. KaiC interacts with SasA, activating its autokinase function and leading to RpaA activation.</text>
</comment>
<comment type="domain">
    <text evidence="1">In the homohexamer the 2 domains (called CI and CII) self-associate to each form a 'donut' layer; the compactness and local conformation of the domains varies over the cell cycle and impacts function. CII has the autokinase and autophosphatase activities, both CI and CII have (weak) ATPase activity; CI has the clock pacemaker role.</text>
</comment>
<comment type="PTM">
    <text evidence="1">Phosphorylated on serine and threonine residues by autocatalysis. Has a 4 step phosphorylation cycle; the autokinase acts first on Thr-428, then Ser-427. When Ser-427 is modified KaiC switches to an autophosphatase mode, acting first on phospho-Thr-428 then phospho-Ser-427.</text>
</comment>
<comment type="miscellaneous">
    <text evidence="1">The kiaA gene has been eliminated from Prochlorococcus during genome streamlining. It has been suggested that the central oscillator in Prochlorococcus does not have to be as robust as in other cyanobacteria because the former live in specific niches of the Earth's oceans; they divide exactly once a day and at the same time. Thus gene loss, and changes in kaiC function compared to other cyanobacteria, can occur.</text>
</comment>
<comment type="similarity">
    <text evidence="1">Belongs to the KaiC family.</text>
</comment>
<organism>
    <name type="scientific">Prochlorococcus marinus (strain MIT 9313)</name>
    <dbReference type="NCBI Taxonomy" id="74547"/>
    <lineage>
        <taxon>Bacteria</taxon>
        <taxon>Bacillati</taxon>
        <taxon>Cyanobacteriota</taxon>
        <taxon>Cyanophyceae</taxon>
        <taxon>Synechococcales</taxon>
        <taxon>Prochlorococcaceae</taxon>
        <taxon>Prochlorococcus</taxon>
    </lineage>
</organism>